<gene>
    <name evidence="1" type="primary">pheS</name>
    <name type="ordered locus">CLJ_B3397</name>
</gene>
<proteinExistence type="inferred from homology"/>
<comment type="catalytic activity">
    <reaction evidence="1">
        <text>tRNA(Phe) + L-phenylalanine + ATP = L-phenylalanyl-tRNA(Phe) + AMP + diphosphate + H(+)</text>
        <dbReference type="Rhea" id="RHEA:19413"/>
        <dbReference type="Rhea" id="RHEA-COMP:9668"/>
        <dbReference type="Rhea" id="RHEA-COMP:9699"/>
        <dbReference type="ChEBI" id="CHEBI:15378"/>
        <dbReference type="ChEBI" id="CHEBI:30616"/>
        <dbReference type="ChEBI" id="CHEBI:33019"/>
        <dbReference type="ChEBI" id="CHEBI:58095"/>
        <dbReference type="ChEBI" id="CHEBI:78442"/>
        <dbReference type="ChEBI" id="CHEBI:78531"/>
        <dbReference type="ChEBI" id="CHEBI:456215"/>
        <dbReference type="EC" id="6.1.1.20"/>
    </reaction>
</comment>
<comment type="cofactor">
    <cofactor evidence="1">
        <name>Mg(2+)</name>
        <dbReference type="ChEBI" id="CHEBI:18420"/>
    </cofactor>
    <text evidence="1">Binds 2 magnesium ions per tetramer.</text>
</comment>
<comment type="subunit">
    <text evidence="1">Tetramer of two alpha and two beta subunits.</text>
</comment>
<comment type="subcellular location">
    <subcellularLocation>
        <location evidence="1">Cytoplasm</location>
    </subcellularLocation>
</comment>
<comment type="similarity">
    <text evidence="1">Belongs to the class-II aminoacyl-tRNA synthetase family. Phe-tRNA synthetase alpha subunit type 1 subfamily.</text>
</comment>
<feature type="chain" id="PRO_1000204821" description="Phenylalanine--tRNA ligase alpha subunit">
    <location>
        <begin position="1"/>
        <end position="339"/>
    </location>
</feature>
<feature type="binding site" evidence="1">
    <location>
        <position position="254"/>
    </location>
    <ligand>
        <name>Mg(2+)</name>
        <dbReference type="ChEBI" id="CHEBI:18420"/>
        <note>shared with beta subunit</note>
    </ligand>
</feature>
<accession>C3KTJ3</accession>
<evidence type="ECO:0000255" key="1">
    <source>
        <dbReference type="HAMAP-Rule" id="MF_00281"/>
    </source>
</evidence>
<protein>
    <recommendedName>
        <fullName evidence="1">Phenylalanine--tRNA ligase alpha subunit</fullName>
        <ecNumber evidence="1">6.1.1.20</ecNumber>
    </recommendedName>
    <alternativeName>
        <fullName evidence="1">Phenylalanyl-tRNA synthetase alpha subunit</fullName>
        <shortName evidence="1">PheRS</shortName>
    </alternativeName>
</protein>
<sequence length="339" mass="38627">MRQKLEEIKNSAINELKASLSKDQLEVIRVKYLGKKGELTQILRGMGALSQEERPIVGKVANEVRSYIEETIKEAFSDIKNKEKSIRLENETIDITMPGKKQEVGKRHPLDLTLESMKDIFISMGFTIEEGPEVELDKYNFEALNIPKNHPARGEQDTFYINDNLVLRTQTSPIQIRTMENQKPPIKMIAPGKVYRSDSVDATHSPIFYQMEGLVVDKGITFSDLKGTLELFAKRMFGDKVKTKFRPHHFPFTEPSAEMDATCFVCNGEGCKVCKGSGWIELLGCGMVHPQVLRNCNIDPEVYSGFAFGFGVDRMVMMKYGIDDIRLLYESDMRFLNQF</sequence>
<organism>
    <name type="scientific">Clostridium botulinum (strain 657 / Type Ba4)</name>
    <dbReference type="NCBI Taxonomy" id="515621"/>
    <lineage>
        <taxon>Bacteria</taxon>
        <taxon>Bacillati</taxon>
        <taxon>Bacillota</taxon>
        <taxon>Clostridia</taxon>
        <taxon>Eubacteriales</taxon>
        <taxon>Clostridiaceae</taxon>
        <taxon>Clostridium</taxon>
    </lineage>
</organism>
<name>SYFA_CLOB6</name>
<keyword id="KW-0030">Aminoacyl-tRNA synthetase</keyword>
<keyword id="KW-0067">ATP-binding</keyword>
<keyword id="KW-0963">Cytoplasm</keyword>
<keyword id="KW-0436">Ligase</keyword>
<keyword id="KW-0460">Magnesium</keyword>
<keyword id="KW-0479">Metal-binding</keyword>
<keyword id="KW-0547">Nucleotide-binding</keyword>
<keyword id="KW-0648">Protein biosynthesis</keyword>
<dbReference type="EC" id="6.1.1.20" evidence="1"/>
<dbReference type="EMBL" id="CP001083">
    <property type="protein sequence ID" value="ACQ55105.1"/>
    <property type="molecule type" value="Genomic_DNA"/>
</dbReference>
<dbReference type="RefSeq" id="WP_003360157.1">
    <property type="nucleotide sequence ID" value="NC_012658.1"/>
</dbReference>
<dbReference type="SMR" id="C3KTJ3"/>
<dbReference type="KEGG" id="cbi:CLJ_B3397"/>
<dbReference type="HOGENOM" id="CLU_025086_0_1_9"/>
<dbReference type="Proteomes" id="UP000002333">
    <property type="component" value="Chromosome"/>
</dbReference>
<dbReference type="GO" id="GO:0005737">
    <property type="term" value="C:cytoplasm"/>
    <property type="evidence" value="ECO:0007669"/>
    <property type="project" value="UniProtKB-SubCell"/>
</dbReference>
<dbReference type="GO" id="GO:0005524">
    <property type="term" value="F:ATP binding"/>
    <property type="evidence" value="ECO:0007669"/>
    <property type="project" value="UniProtKB-UniRule"/>
</dbReference>
<dbReference type="GO" id="GO:0140096">
    <property type="term" value="F:catalytic activity, acting on a protein"/>
    <property type="evidence" value="ECO:0007669"/>
    <property type="project" value="UniProtKB-ARBA"/>
</dbReference>
<dbReference type="GO" id="GO:0000287">
    <property type="term" value="F:magnesium ion binding"/>
    <property type="evidence" value="ECO:0007669"/>
    <property type="project" value="UniProtKB-UniRule"/>
</dbReference>
<dbReference type="GO" id="GO:0004826">
    <property type="term" value="F:phenylalanine-tRNA ligase activity"/>
    <property type="evidence" value="ECO:0007669"/>
    <property type="project" value="UniProtKB-UniRule"/>
</dbReference>
<dbReference type="GO" id="GO:0016740">
    <property type="term" value="F:transferase activity"/>
    <property type="evidence" value="ECO:0007669"/>
    <property type="project" value="UniProtKB-ARBA"/>
</dbReference>
<dbReference type="GO" id="GO:0000049">
    <property type="term" value="F:tRNA binding"/>
    <property type="evidence" value="ECO:0007669"/>
    <property type="project" value="InterPro"/>
</dbReference>
<dbReference type="GO" id="GO:0006432">
    <property type="term" value="P:phenylalanyl-tRNA aminoacylation"/>
    <property type="evidence" value="ECO:0007669"/>
    <property type="project" value="UniProtKB-UniRule"/>
</dbReference>
<dbReference type="CDD" id="cd00496">
    <property type="entry name" value="PheRS_alpha_core"/>
    <property type="match status" value="1"/>
</dbReference>
<dbReference type="FunFam" id="3.30.930.10:FF:000003">
    <property type="entry name" value="Phenylalanine--tRNA ligase alpha subunit"/>
    <property type="match status" value="1"/>
</dbReference>
<dbReference type="Gene3D" id="3.30.930.10">
    <property type="entry name" value="Bira Bifunctional Protein, Domain 2"/>
    <property type="match status" value="1"/>
</dbReference>
<dbReference type="HAMAP" id="MF_00281">
    <property type="entry name" value="Phe_tRNA_synth_alpha1"/>
    <property type="match status" value="1"/>
</dbReference>
<dbReference type="InterPro" id="IPR006195">
    <property type="entry name" value="aa-tRNA-synth_II"/>
</dbReference>
<dbReference type="InterPro" id="IPR045864">
    <property type="entry name" value="aa-tRNA-synth_II/BPL/LPL"/>
</dbReference>
<dbReference type="InterPro" id="IPR004529">
    <property type="entry name" value="Phe-tRNA-synth_IIc_asu"/>
</dbReference>
<dbReference type="InterPro" id="IPR004188">
    <property type="entry name" value="Phe-tRNA_ligase_II_N"/>
</dbReference>
<dbReference type="InterPro" id="IPR022911">
    <property type="entry name" value="Phe_tRNA_ligase_alpha1_bac"/>
</dbReference>
<dbReference type="InterPro" id="IPR002319">
    <property type="entry name" value="Phenylalanyl-tRNA_Synthase"/>
</dbReference>
<dbReference type="InterPro" id="IPR010978">
    <property type="entry name" value="tRNA-bd_arm"/>
</dbReference>
<dbReference type="NCBIfam" id="TIGR00468">
    <property type="entry name" value="pheS"/>
    <property type="match status" value="1"/>
</dbReference>
<dbReference type="PANTHER" id="PTHR11538:SF41">
    <property type="entry name" value="PHENYLALANINE--TRNA LIGASE, MITOCHONDRIAL"/>
    <property type="match status" value="1"/>
</dbReference>
<dbReference type="PANTHER" id="PTHR11538">
    <property type="entry name" value="PHENYLALANYL-TRNA SYNTHETASE"/>
    <property type="match status" value="1"/>
</dbReference>
<dbReference type="Pfam" id="PF02912">
    <property type="entry name" value="Phe_tRNA-synt_N"/>
    <property type="match status" value="1"/>
</dbReference>
<dbReference type="Pfam" id="PF01409">
    <property type="entry name" value="tRNA-synt_2d"/>
    <property type="match status" value="1"/>
</dbReference>
<dbReference type="SUPFAM" id="SSF55681">
    <property type="entry name" value="Class II aaRS and biotin synthetases"/>
    <property type="match status" value="1"/>
</dbReference>
<dbReference type="SUPFAM" id="SSF46589">
    <property type="entry name" value="tRNA-binding arm"/>
    <property type="match status" value="1"/>
</dbReference>
<dbReference type="PROSITE" id="PS50862">
    <property type="entry name" value="AA_TRNA_LIGASE_II"/>
    <property type="match status" value="1"/>
</dbReference>
<reference key="1">
    <citation type="submission" date="2008-05" db="EMBL/GenBank/DDBJ databases">
        <title>Genome sequence of Clostridium botulinum Ba4 strain 657.</title>
        <authorList>
            <person name="Shrivastava S."/>
            <person name="Brown J.L."/>
            <person name="Bruce D."/>
            <person name="Detter C."/>
            <person name="Munk C."/>
            <person name="Smith L.A."/>
            <person name="Smith T.J."/>
            <person name="Sutton G."/>
            <person name="Brettin T.S."/>
        </authorList>
    </citation>
    <scope>NUCLEOTIDE SEQUENCE [LARGE SCALE GENOMIC DNA]</scope>
    <source>
        <strain>657 / Type Ba4</strain>
    </source>
</reference>